<proteinExistence type="evidence at protein level"/>
<name>VA52_POLPI</name>
<evidence type="ECO:0000250" key="1">
    <source>
        <dbReference type="UniProtKB" id="P10736"/>
    </source>
</evidence>
<evidence type="ECO:0000255" key="2"/>
<evidence type="ECO:0000269" key="3">
    <source>
    </source>
</evidence>
<evidence type="ECO:0000269" key="4">
    <source ref="2"/>
</evidence>
<evidence type="ECO:0000269" key="5">
    <source ref="3"/>
</evidence>
<evidence type="ECO:0000303" key="6">
    <source>
    </source>
</evidence>
<evidence type="ECO:0000303" key="7">
    <source ref="2"/>
</evidence>
<evidence type="ECO:0000303" key="8">
    <source ref="3"/>
</evidence>
<evidence type="ECO:0000305" key="9"/>
<evidence type="ECO:0000312" key="10">
    <source>
        <dbReference type="EMBL" id="ANW82807.1"/>
    </source>
</evidence>
<comment type="subcellular location">
    <subcellularLocation>
        <location evidence="4">Secreted</location>
    </subcellularLocation>
</comment>
<comment type="tissue specificity">
    <text evidence="3 5">Expressed by the venom gland.</text>
</comment>
<comment type="mass spectrometry" mass="23084.0" method="MALDI" evidence="4"/>
<comment type="allergen">
    <text evidence="4">Causes an allergic reaction in human.</text>
</comment>
<comment type="similarity">
    <text evidence="9">Belongs to the CRISP family. Venom allergen 5-like subfamily.</text>
</comment>
<sequence length="206" mass="23084">NKYCNIKCSKVAHTVCQYGESTKPSSKCNKVSITSVGVTEEEKKLIVDEHNRFRQKVAQGLETRGNPGPQPAASDMNNLVWNDELAYIAQVWASQCQFFVHDKCRNTAQYQVGQNIAYSASTAAYPGIVSLIVLWENEVKDFNYSQGITKENFSKVGHYTQVVWAKTKEVGCGSIKYIEKGMKSHYLVCNYGPAGNYMGQPIYTKK</sequence>
<reference evidence="10" key="1">
    <citation type="journal article" date="2017" name="Toxins">
        <title>Heterologous Expression, Purification and Immunoreactivity of the Antigen 5 from Polybia paulista Wasp Venom.</title>
        <authorList>
            <person name="Bazon M.L."/>
            <person name="Perez-Riverol A."/>
            <person name="Dos Santos-Pinto J.R.A."/>
            <person name="Fernandes L.G.R."/>
            <person name="Lasa A.M."/>
            <person name="Justo-Jacomini D.L."/>
            <person name="Palma M.S."/>
            <person name="Zollner R.L."/>
            <person name="Brochetto-Braga M.R."/>
        </authorList>
    </citation>
    <scope>NUCLEOTIDE SEQUENCE [MRNA]</scope>
    <scope>TISSUE SPECIFICITY</scope>
    <source>
        <tissue evidence="6">Venom gland</tissue>
    </source>
</reference>
<reference key="2">
    <citation type="submission" date="2015-09" db="UniProtKB">
        <authorList>
            <person name="Da Amicis K."/>
            <person name="Watanabe A."/>
            <person name="Castro F."/>
            <person name="Palma M."/>
            <person name="Kalil J."/>
            <person name="Ferreira F."/>
            <person name="Briza P."/>
            <person name="Wohlschlager T."/>
            <person name="Gadermaier G."/>
            <person name="Santos K.S."/>
        </authorList>
    </citation>
    <scope>PROTEIN SEQUENCE</scope>
    <scope>SUBCELLULAR LOCATION</scope>
    <scope>MASS SPECTROMETRY</scope>
    <scope>ALLERGEN</scope>
    <scope>IDENTIFICATION BY MASS SPECTROMETRY</scope>
    <source>
        <tissue evidence="7">Venom</tissue>
    </source>
</reference>
<reference key="3">
    <citation type="submission" date="2010-01" db="EMBL/GenBank/DDBJ databases">
        <title>Cloning and heterologous expression of the antigen 5 venom Polybia paulista (Hymenopetra: Vespidae).</title>
        <authorList>
            <person name="Giratto D.T."/>
            <person name="Suemasu C.N."/>
            <person name="Jacomini D.L.J."/>
            <person name="Brochetto-Braga M.R."/>
        </authorList>
    </citation>
    <scope>NUCLEOTIDE SEQUENCE [MRNA] OF 18-158</scope>
    <scope>TISSUE SPECIFICITY</scope>
    <source>
        <tissue evidence="8">Venom gland</tissue>
    </source>
</reference>
<dbReference type="EMBL" id="KU558986">
    <property type="protein sequence ID" value="ANW82807.1"/>
    <property type="molecule type" value="mRNA"/>
</dbReference>
<dbReference type="EMBL" id="GU562619">
    <property type="protein sequence ID" value="ADD63684.1"/>
    <property type="molecule type" value="mRNA"/>
</dbReference>
<dbReference type="EMBL" id="GU573767">
    <property type="protein sequence ID" value="ADD64704.1"/>
    <property type="molecule type" value="mRNA"/>
</dbReference>
<dbReference type="SMR" id="D4P2Y4"/>
<dbReference type="Allergome" id="11910">
    <property type="allergen name" value="Poly p 5.0101"/>
</dbReference>
<dbReference type="Allergome" id="8738">
    <property type="allergen name" value="Poly p 5"/>
</dbReference>
<dbReference type="GO" id="GO:0005576">
    <property type="term" value="C:extracellular region"/>
    <property type="evidence" value="ECO:0007669"/>
    <property type="project" value="UniProtKB-SubCell"/>
</dbReference>
<dbReference type="CDD" id="cd05380">
    <property type="entry name" value="CAP_euk"/>
    <property type="match status" value="1"/>
</dbReference>
<dbReference type="Gene3D" id="3.40.33.10">
    <property type="entry name" value="CAP"/>
    <property type="match status" value="1"/>
</dbReference>
<dbReference type="InterPro" id="IPR018244">
    <property type="entry name" value="Allrgn_V5/Tpx1_CS"/>
</dbReference>
<dbReference type="InterPro" id="IPR014044">
    <property type="entry name" value="CAP_dom"/>
</dbReference>
<dbReference type="InterPro" id="IPR035940">
    <property type="entry name" value="CAP_sf"/>
</dbReference>
<dbReference type="InterPro" id="IPR001283">
    <property type="entry name" value="CRISP-related"/>
</dbReference>
<dbReference type="InterPro" id="IPR002413">
    <property type="entry name" value="V5_allergen-like"/>
</dbReference>
<dbReference type="PANTHER" id="PTHR10334">
    <property type="entry name" value="CYSTEINE-RICH SECRETORY PROTEIN-RELATED"/>
    <property type="match status" value="1"/>
</dbReference>
<dbReference type="Pfam" id="PF00188">
    <property type="entry name" value="CAP"/>
    <property type="match status" value="1"/>
</dbReference>
<dbReference type="PRINTS" id="PR00838">
    <property type="entry name" value="V5ALLERGEN"/>
</dbReference>
<dbReference type="PRINTS" id="PR00837">
    <property type="entry name" value="V5TPXLIKE"/>
</dbReference>
<dbReference type="SMART" id="SM00198">
    <property type="entry name" value="SCP"/>
    <property type="match status" value="1"/>
</dbReference>
<dbReference type="SUPFAM" id="SSF55797">
    <property type="entry name" value="PR-1-like"/>
    <property type="match status" value="1"/>
</dbReference>
<dbReference type="PROSITE" id="PS01009">
    <property type="entry name" value="CRISP_1"/>
    <property type="match status" value="1"/>
</dbReference>
<dbReference type="PROSITE" id="PS01010">
    <property type="entry name" value="CRISP_2"/>
    <property type="match status" value="1"/>
</dbReference>
<feature type="chain" id="PRO_0000401929" description="Venom allergen 5 2" evidence="4">
    <location>
        <begin position="1"/>
        <end position="206"/>
    </location>
</feature>
<feature type="domain" description="SCP" evidence="2">
    <location>
        <begin position="48"/>
        <end position="191"/>
    </location>
</feature>
<feature type="disulfide bond" evidence="1">
    <location>
        <begin position="4"/>
        <end position="16"/>
    </location>
</feature>
<feature type="disulfide bond" evidence="1">
    <location>
        <begin position="8"/>
        <end position="104"/>
    </location>
</feature>
<feature type="disulfide bond" evidence="1">
    <location>
        <begin position="28"/>
        <end position="96"/>
    </location>
</feature>
<feature type="disulfide bond" evidence="1">
    <location>
        <begin position="172"/>
        <end position="189"/>
    </location>
</feature>
<accession>D4P2Y4</accession>
<accession>A0A1B1XXW6</accession>
<accession>C0HJV9</accession>
<protein>
    <recommendedName>
        <fullName>Venom allergen 5 2</fullName>
    </recommendedName>
    <alternativeName>
        <fullName>Antigen 5</fullName>
    </alternativeName>
    <alternativeName>
        <fullName>Cysteine-rich venom protein</fullName>
        <shortName>CRVP</shortName>
    </alternativeName>
    <allergenName evidence="9">Poly p 5</allergenName>
</protein>
<keyword id="KW-0020">Allergen</keyword>
<keyword id="KW-0903">Direct protein sequencing</keyword>
<keyword id="KW-1015">Disulfide bond</keyword>
<keyword id="KW-0964">Secreted</keyword>
<organism>
    <name type="scientific">Polybia paulista</name>
    <name type="common">Neotropical social wasp</name>
    <name type="synonym">Swarm-founding polistine wasp</name>
    <dbReference type="NCBI Taxonomy" id="291283"/>
    <lineage>
        <taxon>Eukaryota</taxon>
        <taxon>Metazoa</taxon>
        <taxon>Ecdysozoa</taxon>
        <taxon>Arthropoda</taxon>
        <taxon>Hexapoda</taxon>
        <taxon>Insecta</taxon>
        <taxon>Pterygota</taxon>
        <taxon>Neoptera</taxon>
        <taxon>Endopterygota</taxon>
        <taxon>Hymenoptera</taxon>
        <taxon>Apocrita</taxon>
        <taxon>Aculeata</taxon>
        <taxon>Vespoidea</taxon>
        <taxon>Vespidae</taxon>
        <taxon>Polistinae</taxon>
        <taxon>Epiponini</taxon>
        <taxon>Polybia</taxon>
    </lineage>
</organism>